<gene>
    <name type="primary">eif2b</name>
    <name type="ordered locus">MTH_1769</name>
</gene>
<sequence length="135" mass="15587">MDDYEKLLERAIDQLPPEVFETKRFEVPKAYSVIQGNRTFIQNFREVADALNRDPQHLLKFLLRELGTAGNLEGGRAILQGKFTHFLINERIEDYVNKFVICHECNRPDTRIIREGRISLLKCEACGAKAPLKNV</sequence>
<protein>
    <recommendedName>
        <fullName>Translation initiation factor 2 subunit beta</fullName>
    </recommendedName>
    <alternativeName>
        <fullName>aIF2-beta</fullName>
    </alternativeName>
    <alternativeName>
        <fullName>eIF-2-beta</fullName>
    </alternativeName>
</protein>
<evidence type="ECO:0000250" key="1"/>
<evidence type="ECO:0000305" key="2"/>
<evidence type="ECO:0007829" key="3">
    <source>
        <dbReference type="PDB" id="1NEE"/>
    </source>
</evidence>
<accession>O27797</accession>
<proteinExistence type="evidence at protein level"/>
<dbReference type="EMBL" id="AE000666">
    <property type="protein sequence ID" value="AAB86235.1"/>
    <property type="molecule type" value="Genomic_DNA"/>
</dbReference>
<dbReference type="PIR" id="B69103">
    <property type="entry name" value="B69103"/>
</dbReference>
<dbReference type="RefSeq" id="WP_010877371.1">
    <property type="nucleotide sequence ID" value="NC_000916.1"/>
</dbReference>
<dbReference type="PDB" id="1NEE">
    <property type="method" value="NMR"/>
    <property type="chains" value="A=1-135"/>
</dbReference>
<dbReference type="PDBsum" id="1NEE"/>
<dbReference type="SMR" id="O27797"/>
<dbReference type="FunCoup" id="O27797">
    <property type="interactions" value="78"/>
</dbReference>
<dbReference type="STRING" id="187420.MTH_1769"/>
<dbReference type="PaxDb" id="187420-MTH_1769"/>
<dbReference type="EnsemblBacteria" id="AAB86235">
    <property type="protein sequence ID" value="AAB86235"/>
    <property type="gene ID" value="MTH_1769"/>
</dbReference>
<dbReference type="KEGG" id="mth:MTH_1769"/>
<dbReference type="PATRIC" id="fig|187420.15.peg.1725"/>
<dbReference type="HOGENOM" id="CLU_026663_3_1_2"/>
<dbReference type="InParanoid" id="O27797"/>
<dbReference type="EvolutionaryTrace" id="O27797"/>
<dbReference type="Proteomes" id="UP000005223">
    <property type="component" value="Chromosome"/>
</dbReference>
<dbReference type="GO" id="GO:0003743">
    <property type="term" value="F:translation initiation factor activity"/>
    <property type="evidence" value="ECO:0007669"/>
    <property type="project" value="UniProtKB-UniRule"/>
</dbReference>
<dbReference type="Gene3D" id="3.30.30.170">
    <property type="match status" value="1"/>
</dbReference>
<dbReference type="HAMAP" id="MF_00232">
    <property type="entry name" value="eIF_2_beta"/>
    <property type="match status" value="1"/>
</dbReference>
<dbReference type="InterPro" id="IPR045196">
    <property type="entry name" value="IF2/IF5"/>
</dbReference>
<dbReference type="InterPro" id="IPR004458">
    <property type="entry name" value="TIF2_bsu_arc"/>
</dbReference>
<dbReference type="InterPro" id="IPR002735">
    <property type="entry name" value="Transl_init_fac_IF2/IF5_dom"/>
</dbReference>
<dbReference type="InterPro" id="IPR016189">
    <property type="entry name" value="Transl_init_fac_IF2/IF5_N"/>
</dbReference>
<dbReference type="InterPro" id="IPR016190">
    <property type="entry name" value="Transl_init_fac_IF2/IF5_Zn-bd"/>
</dbReference>
<dbReference type="NCBIfam" id="TIGR00311">
    <property type="entry name" value="aIF-2beta"/>
    <property type="match status" value="1"/>
</dbReference>
<dbReference type="NCBIfam" id="NF003067">
    <property type="entry name" value="PRK03988.1"/>
    <property type="match status" value="1"/>
</dbReference>
<dbReference type="PANTHER" id="PTHR23001">
    <property type="entry name" value="EUKARYOTIC TRANSLATION INITIATION FACTOR"/>
    <property type="match status" value="1"/>
</dbReference>
<dbReference type="PANTHER" id="PTHR23001:SF3">
    <property type="entry name" value="EUKARYOTIC TRANSLATION INITIATION FACTOR 2 SUBUNIT 2"/>
    <property type="match status" value="1"/>
</dbReference>
<dbReference type="Pfam" id="PF01873">
    <property type="entry name" value="eIF-5_eIF-2B"/>
    <property type="match status" value="1"/>
</dbReference>
<dbReference type="SMART" id="SM00653">
    <property type="entry name" value="eIF2B_5"/>
    <property type="match status" value="1"/>
</dbReference>
<dbReference type="SUPFAM" id="SSF100966">
    <property type="entry name" value="Translation initiation factor 2 beta, aIF2beta, N-terminal domain"/>
    <property type="match status" value="1"/>
</dbReference>
<dbReference type="SUPFAM" id="SSF75689">
    <property type="entry name" value="Zinc-binding domain of translation initiation factor 2 beta"/>
    <property type="match status" value="1"/>
</dbReference>
<organism>
    <name type="scientific">Methanothermobacter thermautotrophicus (strain ATCC 29096 / DSM 1053 / JCM 10044 / NBRC 100330 / Delta H)</name>
    <name type="common">Methanobacterium thermoautotrophicum</name>
    <dbReference type="NCBI Taxonomy" id="187420"/>
    <lineage>
        <taxon>Archaea</taxon>
        <taxon>Methanobacteriati</taxon>
        <taxon>Methanobacteriota</taxon>
        <taxon>Methanomada group</taxon>
        <taxon>Methanobacteria</taxon>
        <taxon>Methanobacteriales</taxon>
        <taxon>Methanobacteriaceae</taxon>
        <taxon>Methanothermobacter</taxon>
    </lineage>
</organism>
<name>IF2B_METTH</name>
<comment type="function">
    <text evidence="1">eIF-2 functions in the early steps of protein synthesis by forming a ternary complex with GTP and initiator tRNA.</text>
</comment>
<comment type="subunit">
    <text evidence="1">Heterotrimer composed of an alpha, a beta and a gamma chain.</text>
</comment>
<comment type="similarity">
    <text evidence="2">Belongs to the eIF-2-beta/eIF-5 family.</text>
</comment>
<keyword id="KW-0002">3D-structure</keyword>
<keyword id="KW-0396">Initiation factor</keyword>
<keyword id="KW-0648">Protein biosynthesis</keyword>
<keyword id="KW-1185">Reference proteome</keyword>
<feature type="chain" id="PRO_0000137425" description="Translation initiation factor 2 subunit beta">
    <location>
        <begin position="1"/>
        <end position="135"/>
    </location>
</feature>
<feature type="strand" evidence="3">
    <location>
        <begin position="10"/>
        <end position="15"/>
    </location>
</feature>
<feature type="strand" evidence="3">
    <location>
        <begin position="38"/>
        <end position="42"/>
    </location>
</feature>
<feature type="helix" evidence="3">
    <location>
        <begin position="44"/>
        <end position="51"/>
    </location>
</feature>
<feature type="helix" evidence="3">
    <location>
        <begin position="55"/>
        <end position="65"/>
    </location>
</feature>
<feature type="turn" evidence="3">
    <location>
        <begin position="74"/>
        <end position="76"/>
    </location>
</feature>
<feature type="strand" evidence="3">
    <location>
        <begin position="77"/>
        <end position="82"/>
    </location>
</feature>
<feature type="strand" evidence="3">
    <location>
        <begin position="84"/>
        <end position="86"/>
    </location>
</feature>
<feature type="helix" evidence="3">
    <location>
        <begin position="87"/>
        <end position="96"/>
    </location>
</feature>
<feature type="helix" evidence="3">
    <location>
        <begin position="98"/>
        <end position="102"/>
    </location>
</feature>
<feature type="strand" evidence="3">
    <location>
        <begin position="113"/>
        <end position="115"/>
    </location>
</feature>
<feature type="turn" evidence="3">
    <location>
        <begin position="116"/>
        <end position="119"/>
    </location>
</feature>
<feature type="strand" evidence="3">
    <location>
        <begin position="120"/>
        <end position="122"/>
    </location>
</feature>
<reference key="1">
    <citation type="journal article" date="1997" name="J. Bacteriol.">
        <title>Complete genome sequence of Methanobacterium thermoautotrophicum deltaH: functional analysis and comparative genomics.</title>
        <authorList>
            <person name="Smith D.R."/>
            <person name="Doucette-Stamm L.A."/>
            <person name="Deloughery C."/>
            <person name="Lee H.-M."/>
            <person name="Dubois J."/>
            <person name="Aldredge T."/>
            <person name="Bashirzadeh R."/>
            <person name="Blakely D."/>
            <person name="Cook R."/>
            <person name="Gilbert K."/>
            <person name="Harrison D."/>
            <person name="Hoang L."/>
            <person name="Keagle P."/>
            <person name="Lumm W."/>
            <person name="Pothier B."/>
            <person name="Qiu D."/>
            <person name="Spadafora R."/>
            <person name="Vicare R."/>
            <person name="Wang Y."/>
            <person name="Wierzbowski J."/>
            <person name="Gibson R."/>
            <person name="Jiwani N."/>
            <person name="Caruso A."/>
            <person name="Bush D."/>
            <person name="Safer H."/>
            <person name="Patwell D."/>
            <person name="Prabhakar S."/>
            <person name="McDougall S."/>
            <person name="Shimer G."/>
            <person name="Goyal A."/>
            <person name="Pietrovski S."/>
            <person name="Church G.M."/>
            <person name="Daniels C.J."/>
            <person name="Mao J.-I."/>
            <person name="Rice P."/>
            <person name="Noelling J."/>
            <person name="Reeve J.N."/>
        </authorList>
    </citation>
    <scope>NUCLEOTIDE SEQUENCE [LARGE SCALE GENOMIC DNA]</scope>
    <source>
        <strain>ATCC 29096 / DSM 1053 / JCM 10044 / NBRC 100330 / Delta H</strain>
    </source>
</reference>
<reference key="2">
    <citation type="journal article" date="2004" name="Protein Sci.">
        <title>Structure of the archaeal translation initiation factor aIF2 beta from Methanobacterium thermoautotrophicum: implications for translation initiation.</title>
        <authorList>
            <person name="Gutierrez P."/>
            <person name="Osborne M.J."/>
            <person name="Siddiqui N."/>
            <person name="Trempe J.F."/>
            <person name="Arrowsmith C."/>
            <person name="Gehring K."/>
        </authorList>
    </citation>
    <scope>STRUCTURE BY NMR</scope>
</reference>